<dbReference type="EC" id="2.3.1.180" evidence="1"/>
<dbReference type="EMBL" id="AP008231">
    <property type="protein sequence ID" value="BAD78292.1"/>
    <property type="molecule type" value="Genomic_DNA"/>
</dbReference>
<dbReference type="RefSeq" id="WP_011242415.1">
    <property type="nucleotide sequence ID" value="NZ_CP085785.1"/>
</dbReference>
<dbReference type="SMR" id="Q5N5X5"/>
<dbReference type="KEGG" id="syc:syc0102_c"/>
<dbReference type="eggNOG" id="COG0332">
    <property type="taxonomic scope" value="Bacteria"/>
</dbReference>
<dbReference type="UniPathway" id="UPA00094"/>
<dbReference type="Proteomes" id="UP000001175">
    <property type="component" value="Chromosome"/>
</dbReference>
<dbReference type="GO" id="GO:0005737">
    <property type="term" value="C:cytoplasm"/>
    <property type="evidence" value="ECO:0007669"/>
    <property type="project" value="UniProtKB-SubCell"/>
</dbReference>
<dbReference type="GO" id="GO:0004315">
    <property type="term" value="F:3-oxoacyl-[acyl-carrier-protein] synthase activity"/>
    <property type="evidence" value="ECO:0007669"/>
    <property type="project" value="InterPro"/>
</dbReference>
<dbReference type="GO" id="GO:0033818">
    <property type="term" value="F:beta-ketoacyl-acyl-carrier-protein synthase III activity"/>
    <property type="evidence" value="ECO:0007669"/>
    <property type="project" value="UniProtKB-UniRule"/>
</dbReference>
<dbReference type="GO" id="GO:0006633">
    <property type="term" value="P:fatty acid biosynthetic process"/>
    <property type="evidence" value="ECO:0007669"/>
    <property type="project" value="UniProtKB-UniRule"/>
</dbReference>
<dbReference type="CDD" id="cd00830">
    <property type="entry name" value="KAS_III"/>
    <property type="match status" value="1"/>
</dbReference>
<dbReference type="FunFam" id="3.40.47.10:FF:000004">
    <property type="entry name" value="3-oxoacyl-[acyl-carrier-protein] synthase 3"/>
    <property type="match status" value="1"/>
</dbReference>
<dbReference type="Gene3D" id="3.40.47.10">
    <property type="match status" value="1"/>
</dbReference>
<dbReference type="HAMAP" id="MF_01815">
    <property type="entry name" value="FabH"/>
    <property type="match status" value="1"/>
</dbReference>
<dbReference type="InterPro" id="IPR013747">
    <property type="entry name" value="ACP_syn_III_C"/>
</dbReference>
<dbReference type="InterPro" id="IPR013751">
    <property type="entry name" value="ACP_syn_III_N"/>
</dbReference>
<dbReference type="InterPro" id="IPR004655">
    <property type="entry name" value="FabH"/>
</dbReference>
<dbReference type="InterPro" id="IPR016039">
    <property type="entry name" value="Thiolase-like"/>
</dbReference>
<dbReference type="NCBIfam" id="TIGR00747">
    <property type="entry name" value="fabH"/>
    <property type="match status" value="1"/>
</dbReference>
<dbReference type="NCBIfam" id="NF006829">
    <property type="entry name" value="PRK09352.1"/>
    <property type="match status" value="1"/>
</dbReference>
<dbReference type="PANTHER" id="PTHR43091">
    <property type="entry name" value="3-OXOACYL-[ACYL-CARRIER-PROTEIN] SYNTHASE"/>
    <property type="match status" value="1"/>
</dbReference>
<dbReference type="PANTHER" id="PTHR43091:SF1">
    <property type="entry name" value="BETA-KETOACYL-[ACYL-CARRIER-PROTEIN] SYNTHASE III, CHLOROPLASTIC"/>
    <property type="match status" value="1"/>
</dbReference>
<dbReference type="Pfam" id="PF08545">
    <property type="entry name" value="ACP_syn_III"/>
    <property type="match status" value="1"/>
</dbReference>
<dbReference type="Pfam" id="PF08541">
    <property type="entry name" value="ACP_syn_III_C"/>
    <property type="match status" value="1"/>
</dbReference>
<dbReference type="SUPFAM" id="SSF53901">
    <property type="entry name" value="Thiolase-like"/>
    <property type="match status" value="1"/>
</dbReference>
<comment type="function">
    <text evidence="1">Catalyzes the condensation reaction of fatty acid synthesis by the addition to an acyl acceptor of two carbons from malonyl-ACP. Catalyzes the first condensation reaction which initiates fatty acid synthesis and may therefore play a role in governing the total rate of fatty acid production. Possesses both acetoacetyl-ACP synthase and acetyl transacylase activities. Its substrate specificity determines the biosynthesis of branched-chain and/or straight-chain of fatty acids.</text>
</comment>
<comment type="catalytic activity">
    <reaction evidence="1">
        <text>malonyl-[ACP] + acetyl-CoA + H(+) = 3-oxobutanoyl-[ACP] + CO2 + CoA</text>
        <dbReference type="Rhea" id="RHEA:12080"/>
        <dbReference type="Rhea" id="RHEA-COMP:9623"/>
        <dbReference type="Rhea" id="RHEA-COMP:9625"/>
        <dbReference type="ChEBI" id="CHEBI:15378"/>
        <dbReference type="ChEBI" id="CHEBI:16526"/>
        <dbReference type="ChEBI" id="CHEBI:57287"/>
        <dbReference type="ChEBI" id="CHEBI:57288"/>
        <dbReference type="ChEBI" id="CHEBI:78449"/>
        <dbReference type="ChEBI" id="CHEBI:78450"/>
        <dbReference type="EC" id="2.3.1.180"/>
    </reaction>
</comment>
<comment type="pathway">
    <text evidence="1">Lipid metabolism; fatty acid biosynthesis.</text>
</comment>
<comment type="subunit">
    <text evidence="1">Homodimer.</text>
</comment>
<comment type="subcellular location">
    <subcellularLocation>
        <location evidence="1">Cytoplasm</location>
    </subcellularLocation>
</comment>
<comment type="domain">
    <text evidence="1">The last Arg residue of the ACP-binding site is essential for the weak association between ACP/AcpP and FabH.</text>
</comment>
<comment type="similarity">
    <text evidence="1">Belongs to the thiolase-like superfamily. FabH family.</text>
</comment>
<gene>
    <name evidence="1" type="primary">fabH</name>
    <name type="ordered locus">syc0102_c</name>
</gene>
<evidence type="ECO:0000255" key="1">
    <source>
        <dbReference type="HAMAP-Rule" id="MF_01815"/>
    </source>
</evidence>
<reference key="1">
    <citation type="journal article" date="2007" name="Photosyn. Res.">
        <title>Complete nucleotide sequence of the freshwater unicellular cyanobacterium Synechococcus elongatus PCC 6301 chromosome: gene content and organization.</title>
        <authorList>
            <person name="Sugita C."/>
            <person name="Ogata K."/>
            <person name="Shikata M."/>
            <person name="Jikuya H."/>
            <person name="Takano J."/>
            <person name="Furumichi M."/>
            <person name="Kanehisa M."/>
            <person name="Omata T."/>
            <person name="Sugiura M."/>
            <person name="Sugita M."/>
        </authorList>
    </citation>
    <scope>NUCLEOTIDE SEQUENCE [LARGE SCALE GENOMIC DNA]</scope>
    <source>
        <strain>ATCC 27144 / PCC 6301 / SAUG 1402/1</strain>
    </source>
</reference>
<sequence>MTRPGVGVAITGSGSAVPSTTLSNDQLSQLVETSDEWIRSRTGIGQRRVAQPQIESLSSLAAAAGQSALEAAGLEATSVDLILLATSTPDDLFGSACQVQAALGATQAVAFDLTAACSGFLFALVTGAQFIRSGAYRTVLVIGADVLSRWTDWSDRRTCVLFGDGAGAVVLQASEIDQLLGFEMRSDGSLNGCLTLAYQADNQSLLSDIEIAQGTYQPVAMNGQEVYRFAVKRVPEILEKTLFHAGIDRQEVDWLLLHQANQRILDAVADRLDISRDRVLSNLVNYGNTSSATIPLVLDEAVKAGKIQSGDLIAASGFGAGLSWGAALFRWGTVV</sequence>
<feature type="chain" id="PRO_1000056432" description="Beta-ketoacyl-[acyl-carrier-protein] synthase III">
    <location>
        <begin position="1"/>
        <end position="335"/>
    </location>
</feature>
<feature type="region of interest" description="ACP-binding" evidence="1">
    <location>
        <begin position="259"/>
        <end position="263"/>
    </location>
</feature>
<feature type="active site" evidence="1">
    <location>
        <position position="117"/>
    </location>
</feature>
<feature type="active site" evidence="1">
    <location>
        <position position="258"/>
    </location>
</feature>
<feature type="active site" evidence="1">
    <location>
        <position position="288"/>
    </location>
</feature>
<keyword id="KW-0012">Acyltransferase</keyword>
<keyword id="KW-0963">Cytoplasm</keyword>
<keyword id="KW-0275">Fatty acid biosynthesis</keyword>
<keyword id="KW-0276">Fatty acid metabolism</keyword>
<keyword id="KW-0444">Lipid biosynthesis</keyword>
<keyword id="KW-0443">Lipid metabolism</keyword>
<keyword id="KW-0511">Multifunctional enzyme</keyword>
<keyword id="KW-0808">Transferase</keyword>
<name>FABH_SYNP6</name>
<proteinExistence type="inferred from homology"/>
<accession>Q5N5X5</accession>
<protein>
    <recommendedName>
        <fullName evidence="1">Beta-ketoacyl-[acyl-carrier-protein] synthase III</fullName>
        <shortName evidence="1">Beta-ketoacyl-ACP synthase III</shortName>
        <shortName evidence="1">KAS III</shortName>
        <ecNumber evidence="1">2.3.1.180</ecNumber>
    </recommendedName>
    <alternativeName>
        <fullName evidence="1">3-oxoacyl-[acyl-carrier-protein] synthase 3</fullName>
    </alternativeName>
    <alternativeName>
        <fullName evidence="1">3-oxoacyl-[acyl-carrier-protein] synthase III</fullName>
    </alternativeName>
</protein>
<organism>
    <name type="scientific">Synechococcus sp. (strain ATCC 27144 / PCC 6301 / SAUG 1402/1)</name>
    <name type="common">Anacystis nidulans</name>
    <dbReference type="NCBI Taxonomy" id="269084"/>
    <lineage>
        <taxon>Bacteria</taxon>
        <taxon>Bacillati</taxon>
        <taxon>Cyanobacteriota</taxon>
        <taxon>Cyanophyceae</taxon>
        <taxon>Synechococcales</taxon>
        <taxon>Synechococcaceae</taxon>
        <taxon>Synechococcus</taxon>
    </lineage>
</organism>